<comment type="function">
    <text evidence="1">Produces ATP from ADP in the presence of a proton gradient across the membrane.</text>
</comment>
<comment type="subunit">
    <text>F-type ATPases have 2 components, CF(1) - the catalytic core - and CF(0) - the membrane proton channel. CF(1) has five subunits: alpha(3), beta(3), gamma(1), delta(1), epsilon(1). CF(0) has three main subunits: a, b and c.</text>
</comment>
<comment type="subcellular location">
    <subcellularLocation>
        <location evidence="1">Cell membrane</location>
        <topology evidence="1">Peripheral membrane protein</topology>
    </subcellularLocation>
</comment>
<comment type="similarity">
    <text evidence="1">Belongs to the ATPase epsilon chain family.</text>
</comment>
<feature type="chain" id="PRO_0000188163" description="ATP synthase epsilon chain">
    <location>
        <begin position="1"/>
        <end position="121"/>
    </location>
</feature>
<name>ATPE_MYCPA</name>
<sequence>MAELNVEIVAVDRKIWSGEATFLFTRTTVGEIGILPRHIPLVAQLVDDAMVRVEREGEDDLRIAVDGGFLSVTEETVTILAESAEFSSEIDESAAREAAESDDPRVAARGRARLRAVGAID</sequence>
<dbReference type="EMBL" id="AE016958">
    <property type="protein sequence ID" value="AAS04767.1"/>
    <property type="molecule type" value="Genomic_DNA"/>
</dbReference>
<dbReference type="RefSeq" id="WP_003873219.1">
    <property type="nucleotide sequence ID" value="NZ_CP106873.1"/>
</dbReference>
<dbReference type="SMR" id="Q73X60"/>
<dbReference type="STRING" id="262316.MAP_2450c"/>
<dbReference type="KEGG" id="mpa:MAP_2450c"/>
<dbReference type="eggNOG" id="COG0355">
    <property type="taxonomic scope" value="Bacteria"/>
</dbReference>
<dbReference type="HOGENOM" id="CLU_084338_4_0_11"/>
<dbReference type="Proteomes" id="UP000000580">
    <property type="component" value="Chromosome"/>
</dbReference>
<dbReference type="GO" id="GO:0005886">
    <property type="term" value="C:plasma membrane"/>
    <property type="evidence" value="ECO:0007669"/>
    <property type="project" value="UniProtKB-SubCell"/>
</dbReference>
<dbReference type="GO" id="GO:0045259">
    <property type="term" value="C:proton-transporting ATP synthase complex"/>
    <property type="evidence" value="ECO:0007669"/>
    <property type="project" value="UniProtKB-KW"/>
</dbReference>
<dbReference type="GO" id="GO:0005524">
    <property type="term" value="F:ATP binding"/>
    <property type="evidence" value="ECO:0007669"/>
    <property type="project" value="UniProtKB-UniRule"/>
</dbReference>
<dbReference type="GO" id="GO:0046933">
    <property type="term" value="F:proton-transporting ATP synthase activity, rotational mechanism"/>
    <property type="evidence" value="ECO:0007669"/>
    <property type="project" value="UniProtKB-UniRule"/>
</dbReference>
<dbReference type="CDD" id="cd12152">
    <property type="entry name" value="F1-ATPase_delta"/>
    <property type="match status" value="1"/>
</dbReference>
<dbReference type="Gene3D" id="2.60.15.10">
    <property type="entry name" value="F0F1 ATP synthase delta/epsilon subunit, N-terminal"/>
    <property type="match status" value="1"/>
</dbReference>
<dbReference type="HAMAP" id="MF_00530">
    <property type="entry name" value="ATP_synth_epsil_bac"/>
    <property type="match status" value="1"/>
</dbReference>
<dbReference type="InterPro" id="IPR001469">
    <property type="entry name" value="ATP_synth_F1_dsu/esu"/>
</dbReference>
<dbReference type="InterPro" id="IPR020546">
    <property type="entry name" value="ATP_synth_F1_dsu/esu_N"/>
</dbReference>
<dbReference type="InterPro" id="IPR036771">
    <property type="entry name" value="ATPsynth_dsu/esu_N"/>
</dbReference>
<dbReference type="NCBIfam" id="TIGR01216">
    <property type="entry name" value="ATP_synt_epsi"/>
    <property type="match status" value="1"/>
</dbReference>
<dbReference type="NCBIfam" id="NF009977">
    <property type="entry name" value="PRK13442.1"/>
    <property type="match status" value="1"/>
</dbReference>
<dbReference type="PANTHER" id="PTHR13822">
    <property type="entry name" value="ATP SYNTHASE DELTA/EPSILON CHAIN"/>
    <property type="match status" value="1"/>
</dbReference>
<dbReference type="PANTHER" id="PTHR13822:SF10">
    <property type="entry name" value="ATP SYNTHASE EPSILON CHAIN, CHLOROPLASTIC"/>
    <property type="match status" value="1"/>
</dbReference>
<dbReference type="Pfam" id="PF02823">
    <property type="entry name" value="ATP-synt_DE_N"/>
    <property type="match status" value="1"/>
</dbReference>
<dbReference type="SUPFAM" id="SSF51344">
    <property type="entry name" value="Epsilon subunit of F1F0-ATP synthase N-terminal domain"/>
    <property type="match status" value="1"/>
</dbReference>
<reference key="1">
    <citation type="journal article" date="2005" name="Proc. Natl. Acad. Sci. U.S.A.">
        <title>The complete genome sequence of Mycobacterium avium subspecies paratuberculosis.</title>
        <authorList>
            <person name="Li L."/>
            <person name="Bannantine J.P."/>
            <person name="Zhang Q."/>
            <person name="Amonsin A."/>
            <person name="May B.J."/>
            <person name="Alt D."/>
            <person name="Banerji N."/>
            <person name="Kanjilal S."/>
            <person name="Kapur V."/>
        </authorList>
    </citation>
    <scope>NUCLEOTIDE SEQUENCE [LARGE SCALE GENOMIC DNA]</scope>
    <source>
        <strain>ATCC BAA-968 / K-10</strain>
    </source>
</reference>
<keyword id="KW-0066">ATP synthesis</keyword>
<keyword id="KW-1003">Cell membrane</keyword>
<keyword id="KW-0139">CF(1)</keyword>
<keyword id="KW-0375">Hydrogen ion transport</keyword>
<keyword id="KW-0406">Ion transport</keyword>
<keyword id="KW-0472">Membrane</keyword>
<keyword id="KW-1185">Reference proteome</keyword>
<keyword id="KW-0813">Transport</keyword>
<gene>
    <name evidence="1" type="primary">atpC</name>
    <name type="ordered locus">MAP_2450c</name>
</gene>
<organism>
    <name type="scientific">Mycolicibacterium paratuberculosis (strain ATCC BAA-968 / K-10)</name>
    <name type="common">Mycobacterium paratuberculosis</name>
    <dbReference type="NCBI Taxonomy" id="262316"/>
    <lineage>
        <taxon>Bacteria</taxon>
        <taxon>Bacillati</taxon>
        <taxon>Actinomycetota</taxon>
        <taxon>Actinomycetes</taxon>
        <taxon>Mycobacteriales</taxon>
        <taxon>Mycobacteriaceae</taxon>
        <taxon>Mycobacterium</taxon>
        <taxon>Mycobacterium avium complex (MAC)</taxon>
    </lineage>
</organism>
<accession>Q73X60</accession>
<evidence type="ECO:0000255" key="1">
    <source>
        <dbReference type="HAMAP-Rule" id="MF_00530"/>
    </source>
</evidence>
<proteinExistence type="inferred from homology"/>
<protein>
    <recommendedName>
        <fullName evidence="1">ATP synthase epsilon chain</fullName>
    </recommendedName>
    <alternativeName>
        <fullName evidence="1">ATP synthase F1 sector epsilon subunit</fullName>
    </alternativeName>
    <alternativeName>
        <fullName evidence="1">F-ATPase epsilon subunit</fullName>
    </alternativeName>
</protein>